<reference key="1">
    <citation type="submission" date="2008-08" db="EMBL/GenBank/DDBJ databases">
        <title>Complete sequence of Anaeromyxobacter sp. K.</title>
        <authorList>
            <consortium name="US DOE Joint Genome Institute"/>
            <person name="Lucas S."/>
            <person name="Copeland A."/>
            <person name="Lapidus A."/>
            <person name="Glavina del Rio T."/>
            <person name="Dalin E."/>
            <person name="Tice H."/>
            <person name="Bruce D."/>
            <person name="Goodwin L."/>
            <person name="Pitluck S."/>
            <person name="Saunders E."/>
            <person name="Brettin T."/>
            <person name="Detter J.C."/>
            <person name="Han C."/>
            <person name="Larimer F."/>
            <person name="Land M."/>
            <person name="Hauser L."/>
            <person name="Kyrpides N."/>
            <person name="Ovchinnikiva G."/>
            <person name="Beliaev A."/>
        </authorList>
    </citation>
    <scope>NUCLEOTIDE SEQUENCE [LARGE SCALE GENOMIC DNA]</scope>
    <source>
        <strain>K</strain>
    </source>
</reference>
<sequence length="155" mass="17858">MRCPYCGHLEDRVVDSRETQDGQATRRRRACLSCERRFTTYERIEDVLPQVVKKDGRREAFDRAKIVEGVATACQKRPVSTEQVEALVSAVERQVQELGEREIRTTVIGEAVMQRLRTLDEVAYVRFASVYRAFRDVGEFMTELAGLARKDGEER</sequence>
<accession>B4UIM6</accession>
<organism>
    <name type="scientific">Anaeromyxobacter sp. (strain K)</name>
    <dbReference type="NCBI Taxonomy" id="447217"/>
    <lineage>
        <taxon>Bacteria</taxon>
        <taxon>Pseudomonadati</taxon>
        <taxon>Myxococcota</taxon>
        <taxon>Myxococcia</taxon>
        <taxon>Myxococcales</taxon>
        <taxon>Cystobacterineae</taxon>
        <taxon>Anaeromyxobacteraceae</taxon>
        <taxon>Anaeromyxobacter</taxon>
    </lineage>
</organism>
<evidence type="ECO:0000255" key="1">
    <source>
        <dbReference type="HAMAP-Rule" id="MF_00440"/>
    </source>
</evidence>
<name>NRDR_ANASK</name>
<dbReference type="EMBL" id="CP001131">
    <property type="protein sequence ID" value="ACG74059.1"/>
    <property type="molecule type" value="Genomic_DNA"/>
</dbReference>
<dbReference type="RefSeq" id="WP_012526838.1">
    <property type="nucleotide sequence ID" value="NC_011145.1"/>
</dbReference>
<dbReference type="SMR" id="B4UIM6"/>
<dbReference type="KEGG" id="ank:AnaeK_2835"/>
<dbReference type="HOGENOM" id="CLU_108412_0_0_7"/>
<dbReference type="OrthoDB" id="9807461at2"/>
<dbReference type="Proteomes" id="UP000001871">
    <property type="component" value="Chromosome"/>
</dbReference>
<dbReference type="GO" id="GO:0005524">
    <property type="term" value="F:ATP binding"/>
    <property type="evidence" value="ECO:0007669"/>
    <property type="project" value="UniProtKB-KW"/>
</dbReference>
<dbReference type="GO" id="GO:0003677">
    <property type="term" value="F:DNA binding"/>
    <property type="evidence" value="ECO:0007669"/>
    <property type="project" value="UniProtKB-KW"/>
</dbReference>
<dbReference type="GO" id="GO:0008270">
    <property type="term" value="F:zinc ion binding"/>
    <property type="evidence" value="ECO:0007669"/>
    <property type="project" value="UniProtKB-UniRule"/>
</dbReference>
<dbReference type="GO" id="GO:0045892">
    <property type="term" value="P:negative regulation of DNA-templated transcription"/>
    <property type="evidence" value="ECO:0007669"/>
    <property type="project" value="UniProtKB-UniRule"/>
</dbReference>
<dbReference type="HAMAP" id="MF_00440">
    <property type="entry name" value="NrdR"/>
    <property type="match status" value="1"/>
</dbReference>
<dbReference type="InterPro" id="IPR005144">
    <property type="entry name" value="ATP-cone_dom"/>
</dbReference>
<dbReference type="InterPro" id="IPR055173">
    <property type="entry name" value="NrdR-like_N"/>
</dbReference>
<dbReference type="InterPro" id="IPR003796">
    <property type="entry name" value="RNR_NrdR-like"/>
</dbReference>
<dbReference type="NCBIfam" id="TIGR00244">
    <property type="entry name" value="transcriptional regulator NrdR"/>
    <property type="match status" value="1"/>
</dbReference>
<dbReference type="PANTHER" id="PTHR30455">
    <property type="entry name" value="TRANSCRIPTIONAL REPRESSOR NRDR"/>
    <property type="match status" value="1"/>
</dbReference>
<dbReference type="PANTHER" id="PTHR30455:SF2">
    <property type="entry name" value="TRANSCRIPTIONAL REPRESSOR NRDR"/>
    <property type="match status" value="1"/>
</dbReference>
<dbReference type="Pfam" id="PF03477">
    <property type="entry name" value="ATP-cone"/>
    <property type="match status" value="1"/>
</dbReference>
<dbReference type="Pfam" id="PF22811">
    <property type="entry name" value="Zn_ribbon_NrdR"/>
    <property type="match status" value="1"/>
</dbReference>
<dbReference type="PROSITE" id="PS51161">
    <property type="entry name" value="ATP_CONE"/>
    <property type="match status" value="1"/>
</dbReference>
<proteinExistence type="inferred from homology"/>
<keyword id="KW-0067">ATP-binding</keyword>
<keyword id="KW-0238">DNA-binding</keyword>
<keyword id="KW-0479">Metal-binding</keyword>
<keyword id="KW-0547">Nucleotide-binding</keyword>
<keyword id="KW-0678">Repressor</keyword>
<keyword id="KW-0804">Transcription</keyword>
<keyword id="KW-0805">Transcription regulation</keyword>
<keyword id="KW-0862">Zinc</keyword>
<keyword id="KW-0863">Zinc-finger</keyword>
<protein>
    <recommendedName>
        <fullName evidence="1">Transcriptional repressor NrdR</fullName>
    </recommendedName>
</protein>
<feature type="chain" id="PRO_1000124464" description="Transcriptional repressor NrdR">
    <location>
        <begin position="1"/>
        <end position="155"/>
    </location>
</feature>
<feature type="domain" description="ATP-cone" evidence="1">
    <location>
        <begin position="49"/>
        <end position="139"/>
    </location>
</feature>
<feature type="zinc finger region" evidence="1">
    <location>
        <begin position="3"/>
        <end position="34"/>
    </location>
</feature>
<gene>
    <name evidence="1" type="primary">nrdR</name>
    <name type="ordered locus">AnaeK_2835</name>
</gene>
<comment type="function">
    <text evidence="1">Negatively regulates transcription of bacterial ribonucleotide reductase nrd genes and operons by binding to NrdR-boxes.</text>
</comment>
<comment type="cofactor">
    <cofactor evidence="1">
        <name>Zn(2+)</name>
        <dbReference type="ChEBI" id="CHEBI:29105"/>
    </cofactor>
    <text evidence="1">Binds 1 zinc ion.</text>
</comment>
<comment type="similarity">
    <text evidence="1">Belongs to the NrdR family.</text>
</comment>